<dbReference type="EMBL" id="AY013245">
    <property type="protein sequence ID" value="AAG45492.1"/>
    <property type="molecule type" value="Genomic_DNA"/>
</dbReference>
<dbReference type="EMBL" id="AB625451">
    <property type="protein sequence ID" value="BAM09409.1"/>
    <property type="molecule type" value="mRNA"/>
</dbReference>
<dbReference type="EMBL" id="AC120509">
    <property type="protein sequence ID" value="AAR01687.1"/>
    <property type="molecule type" value="Genomic_DNA"/>
</dbReference>
<dbReference type="EMBL" id="DP000009">
    <property type="protein sequence ID" value="ABF98942.1"/>
    <property type="molecule type" value="Genomic_DNA"/>
</dbReference>
<dbReference type="EMBL" id="AP008209">
    <property type="protein sequence ID" value="BAF13225.1"/>
    <property type="molecule type" value="Genomic_DNA"/>
</dbReference>
<dbReference type="EMBL" id="AP014959">
    <property type="protein sequence ID" value="BAS86444.1"/>
    <property type="molecule type" value="Genomic_DNA"/>
</dbReference>
<dbReference type="EMBL" id="AK066049">
    <property type="protein sequence ID" value="BAG89793.1"/>
    <property type="molecule type" value="mRNA"/>
</dbReference>
<dbReference type="SMR" id="Q9FNU2"/>
<dbReference type="FunCoup" id="Q9FNU2">
    <property type="interactions" value="1887"/>
</dbReference>
<dbReference type="STRING" id="39947.Q9FNU2"/>
<dbReference type="PaxDb" id="39947-Q9FNU2"/>
<dbReference type="EnsemblPlants" id="Os03t0755100-01">
    <property type="protein sequence ID" value="Os03t0755100-01"/>
    <property type="gene ID" value="Os03g0755100"/>
</dbReference>
<dbReference type="Gramene" id="Os03t0755100-01">
    <property type="protein sequence ID" value="Os03t0755100-01"/>
    <property type="gene ID" value="Os03g0755100"/>
</dbReference>
<dbReference type="KEGG" id="dosa:Os03g0755100"/>
<dbReference type="eggNOG" id="KOG0058">
    <property type="taxonomic scope" value="Eukaryota"/>
</dbReference>
<dbReference type="HOGENOM" id="CLU_000604_84_3_1"/>
<dbReference type="InParanoid" id="Q9FNU2"/>
<dbReference type="OMA" id="YYYELYT"/>
<dbReference type="PlantReactome" id="R-OSA-9639136">
    <property type="pathway name" value="Response to Aluminum stress"/>
</dbReference>
<dbReference type="Proteomes" id="UP000000763">
    <property type="component" value="Chromosome 3"/>
</dbReference>
<dbReference type="Proteomes" id="UP000059680">
    <property type="component" value="Chromosome 3"/>
</dbReference>
<dbReference type="GO" id="GO:0016020">
    <property type="term" value="C:membrane"/>
    <property type="evidence" value="ECO:0000318"/>
    <property type="project" value="GO_Central"/>
</dbReference>
<dbReference type="GO" id="GO:0009705">
    <property type="term" value="C:plant-type vacuole membrane"/>
    <property type="evidence" value="ECO:0000314"/>
    <property type="project" value="UniProtKB"/>
</dbReference>
<dbReference type="GO" id="GO:0140359">
    <property type="term" value="F:ABC-type transporter activity"/>
    <property type="evidence" value="ECO:0007669"/>
    <property type="project" value="InterPro"/>
</dbReference>
<dbReference type="GO" id="GO:0015083">
    <property type="term" value="F:aluminum ion transmembrane transporter activity"/>
    <property type="evidence" value="ECO:0000314"/>
    <property type="project" value="UniProtKB"/>
</dbReference>
<dbReference type="GO" id="GO:0005524">
    <property type="term" value="F:ATP binding"/>
    <property type="evidence" value="ECO:0007669"/>
    <property type="project" value="UniProtKB-KW"/>
</dbReference>
<dbReference type="GO" id="GO:0016887">
    <property type="term" value="F:ATP hydrolysis activity"/>
    <property type="evidence" value="ECO:0007669"/>
    <property type="project" value="InterPro"/>
</dbReference>
<dbReference type="GO" id="GO:0042626">
    <property type="term" value="F:ATPase-coupled transmembrane transporter activity"/>
    <property type="evidence" value="ECO:0000318"/>
    <property type="project" value="GO_Central"/>
</dbReference>
<dbReference type="GO" id="GO:1902602">
    <property type="term" value="P:aluminum ion transmembrane transport"/>
    <property type="evidence" value="ECO:0000314"/>
    <property type="project" value="UniProtKB"/>
</dbReference>
<dbReference type="GO" id="GO:0140982">
    <property type="term" value="P:detoxification of aluminum ion"/>
    <property type="evidence" value="ECO:0000315"/>
    <property type="project" value="UniProtKB"/>
</dbReference>
<dbReference type="GO" id="GO:0010044">
    <property type="term" value="P:response to aluminum ion"/>
    <property type="evidence" value="ECO:0000315"/>
    <property type="project" value="UniProtKB"/>
</dbReference>
<dbReference type="GO" id="GO:0055085">
    <property type="term" value="P:transmembrane transport"/>
    <property type="evidence" value="ECO:0000318"/>
    <property type="project" value="GO_Central"/>
</dbReference>
<dbReference type="CDD" id="cd18780">
    <property type="entry name" value="ABC_6TM_AtABCB27_like"/>
    <property type="match status" value="1"/>
</dbReference>
<dbReference type="CDD" id="cd03249">
    <property type="entry name" value="ABC_MTABC3_MDL1_MDL2"/>
    <property type="match status" value="1"/>
</dbReference>
<dbReference type="FunFam" id="1.20.1560.10:FF:000058">
    <property type="entry name" value="ABC transporter B family member 25"/>
    <property type="match status" value="1"/>
</dbReference>
<dbReference type="FunFam" id="3.40.50.300:FF:000836">
    <property type="entry name" value="ABC transporter B family member 25"/>
    <property type="match status" value="1"/>
</dbReference>
<dbReference type="Gene3D" id="1.20.1560.10">
    <property type="entry name" value="ABC transporter type 1, transmembrane domain"/>
    <property type="match status" value="1"/>
</dbReference>
<dbReference type="Gene3D" id="3.40.50.300">
    <property type="entry name" value="P-loop containing nucleotide triphosphate hydrolases"/>
    <property type="match status" value="1"/>
</dbReference>
<dbReference type="InterPro" id="IPR003593">
    <property type="entry name" value="AAA+_ATPase"/>
</dbReference>
<dbReference type="InterPro" id="IPR011527">
    <property type="entry name" value="ABC1_TM_dom"/>
</dbReference>
<dbReference type="InterPro" id="IPR036640">
    <property type="entry name" value="ABC1_TM_sf"/>
</dbReference>
<dbReference type="InterPro" id="IPR003439">
    <property type="entry name" value="ABC_transporter-like_ATP-bd"/>
</dbReference>
<dbReference type="InterPro" id="IPR017871">
    <property type="entry name" value="ABC_transporter-like_CS"/>
</dbReference>
<dbReference type="InterPro" id="IPR027417">
    <property type="entry name" value="P-loop_NTPase"/>
</dbReference>
<dbReference type="InterPro" id="IPR039421">
    <property type="entry name" value="Type_1_exporter"/>
</dbReference>
<dbReference type="PANTHER" id="PTHR43394:SF1">
    <property type="entry name" value="ATP-BINDING CASSETTE SUB-FAMILY B MEMBER 10, MITOCHONDRIAL"/>
    <property type="match status" value="1"/>
</dbReference>
<dbReference type="PANTHER" id="PTHR43394">
    <property type="entry name" value="ATP-DEPENDENT PERMEASE MDL1, MITOCHONDRIAL"/>
    <property type="match status" value="1"/>
</dbReference>
<dbReference type="Pfam" id="PF00664">
    <property type="entry name" value="ABC_membrane"/>
    <property type="match status" value="1"/>
</dbReference>
<dbReference type="Pfam" id="PF00005">
    <property type="entry name" value="ABC_tran"/>
    <property type="match status" value="1"/>
</dbReference>
<dbReference type="PIRSF" id="PIRSF002773">
    <property type="entry name" value="ABC_prm/ATPase_B"/>
    <property type="match status" value="1"/>
</dbReference>
<dbReference type="SMART" id="SM00382">
    <property type="entry name" value="AAA"/>
    <property type="match status" value="1"/>
</dbReference>
<dbReference type="SUPFAM" id="SSF90123">
    <property type="entry name" value="ABC transporter transmembrane region"/>
    <property type="match status" value="1"/>
</dbReference>
<dbReference type="SUPFAM" id="SSF52540">
    <property type="entry name" value="P-loop containing nucleoside triphosphate hydrolases"/>
    <property type="match status" value="1"/>
</dbReference>
<dbReference type="PROSITE" id="PS50929">
    <property type="entry name" value="ABC_TM1F"/>
    <property type="match status" value="1"/>
</dbReference>
<dbReference type="PROSITE" id="PS00211">
    <property type="entry name" value="ABC_TRANSPORTER_1"/>
    <property type="match status" value="1"/>
</dbReference>
<dbReference type="PROSITE" id="PS50893">
    <property type="entry name" value="ABC_TRANSPORTER_2"/>
    <property type="match status" value="1"/>
</dbReference>
<gene>
    <name evidence="5" type="primary">ABCB25</name>
    <name evidence="6" type="synonym">ALS1</name>
    <name evidence="10" type="ordered locus">Os03g0755100</name>
    <name evidence="9" type="ordered locus">LOC_Os03g54790</name>
    <name evidence="8" type="ORF">OSJNBb0081K01.19</name>
</gene>
<feature type="chain" id="PRO_0000405575" description="ABC transporter B family member 25">
    <location>
        <begin position="1"/>
        <end position="641"/>
    </location>
</feature>
<feature type="transmembrane region" description="Helical" evidence="1">
    <location>
        <begin position="52"/>
        <end position="72"/>
    </location>
</feature>
<feature type="transmembrane region" description="Helical" evidence="1">
    <location>
        <begin position="100"/>
        <end position="120"/>
    </location>
</feature>
<feature type="transmembrane region" description="Helical" evidence="1">
    <location>
        <begin position="191"/>
        <end position="211"/>
    </location>
</feature>
<feature type="transmembrane region" description="Helical" evidence="1">
    <location>
        <begin position="284"/>
        <end position="304"/>
    </location>
</feature>
<feature type="transmembrane region" description="Helical" evidence="1">
    <location>
        <begin position="320"/>
        <end position="340"/>
    </location>
</feature>
<feature type="domain" description="ABC transmembrane type-1" evidence="3">
    <location>
        <begin position="55"/>
        <end position="346"/>
    </location>
</feature>
<feature type="domain" description="ABC transporter" evidence="2">
    <location>
        <begin position="380"/>
        <end position="617"/>
    </location>
</feature>
<feature type="binding site" evidence="2">
    <location>
        <begin position="415"/>
        <end position="422"/>
    </location>
    <ligand>
        <name>ATP</name>
        <dbReference type="ChEBI" id="CHEBI:30616"/>
    </ligand>
</feature>
<proteinExistence type="evidence at transcript level"/>
<sequence length="641" mass="69200">MGKNLRIKTGNRAPLLAQGETSRALSDLEEGSNVQPENVGFCRVIKLARHDAGKLVIATMALLVASLSNILVPKYGGKIIDIVSRDVRRPEDKAQALDDVTGTILYIVIIVVTGSVCTALRAWLFNSASERVVARLRKDLFSHLVNQEIAFFDVTRTGELLSRLSEDTQIIKNAATTNLSEALRNITTTSIGLGFMFATSWKLTLLALVIVPVISIAVRKFGRFLRELSHQTQAAAAVASSIAEESFGAIRTVRSFAQESHEVLRYGEKVDETLKLGLKQAKVVGMFSGGLNAASTLSVVIVVIYGANLTINGYMTTGSLTSFILYSLTVGSSVSALSGLYTTVMKASGASRRVFQLLDRVSSMANSGDRCPTNENDGEVELDDVWFAYPSRPSHMILKGITLKLTPGSKVALVGPSGGGKTTIANLIERFYDPLKGRILLNGVPLPEISHQFLHRKVSIVSQEPVLFNCSIEENIAYGLEGKASSADVENAAKMANAHNFICSFPDQYKTVVGERGIRLSGGQKQRVAIARALLMNPRVLLLDEATSALDAESEYLVQDAMDSLMKGRTVLVIAHRLSTVKSADTVAVISDGQIVESGTHDELLSRDGIYTALVKRQLQGPRFEGTSNATAEIEPISNGQ</sequence>
<accession>Q9FNU2</accession>
<accession>I0IVW0</accession>
<organism>
    <name type="scientific">Oryza sativa subsp. japonica</name>
    <name type="common">Rice</name>
    <dbReference type="NCBI Taxonomy" id="39947"/>
    <lineage>
        <taxon>Eukaryota</taxon>
        <taxon>Viridiplantae</taxon>
        <taxon>Streptophyta</taxon>
        <taxon>Embryophyta</taxon>
        <taxon>Tracheophyta</taxon>
        <taxon>Spermatophyta</taxon>
        <taxon>Magnoliopsida</taxon>
        <taxon>Liliopsida</taxon>
        <taxon>Poales</taxon>
        <taxon>Poaceae</taxon>
        <taxon>BOP clade</taxon>
        <taxon>Oryzoideae</taxon>
        <taxon>Oryzeae</taxon>
        <taxon>Oryzinae</taxon>
        <taxon>Oryza</taxon>
        <taxon>Oryza sativa</taxon>
    </lineage>
</organism>
<protein>
    <recommendedName>
        <fullName evidence="5">ABC transporter B family member 25</fullName>
        <shortName evidence="5">ABC transporter ABCB.25</shortName>
        <shortName evidence="5">OsABCB25</shortName>
    </recommendedName>
    <alternativeName>
        <fullName evidence="7">Protein ALS1 homolog</fullName>
    </alternativeName>
    <alternativeName>
        <fullName evidence="6">Protein ALUMINUM SENSITIVE 1</fullName>
        <shortName evidence="6">OsALS1</shortName>
    </alternativeName>
</protein>
<keyword id="KW-0067">ATP-binding</keyword>
<keyword id="KW-0472">Membrane</keyword>
<keyword id="KW-0547">Nucleotide-binding</keyword>
<keyword id="KW-1185">Reference proteome</keyword>
<keyword id="KW-0812">Transmembrane</keyword>
<keyword id="KW-1133">Transmembrane helix</keyword>
<keyword id="KW-0813">Transport</keyword>
<keyword id="KW-0926">Vacuole</keyword>
<reference key="1">
    <citation type="journal article" date="2001" name="Plant Physiol.">
        <title>Comparative sequence analysis of colinear barley and rice bacterial artificial chromosomes.</title>
        <authorList>
            <person name="Dubcovsky J."/>
            <person name="Ramakrishna W."/>
            <person name="SanMiguel P.J."/>
            <person name="Busso C.S."/>
            <person name="Yan L."/>
            <person name="Shiloff B.A."/>
            <person name="Bennetzen J.L."/>
        </authorList>
    </citation>
    <scope>NUCLEOTIDE SEQUENCE [GENOMIC DNA]</scope>
    <source>
        <strain>cv. Nipponbare</strain>
    </source>
</reference>
<reference key="2">
    <citation type="journal article" date="2012" name="Plant J.">
        <title>A tonoplast-localized half-size ABC transporter is required for internal detoxification of aluminum in rice.</title>
        <authorList>
            <person name="Huang C.F."/>
            <person name="Yamaji N."/>
            <person name="Chen Z."/>
            <person name="Ma J.F."/>
        </authorList>
    </citation>
    <scope>NUCLEOTIDE SEQUENCE [MRNA]</scope>
    <scope>FUNCTION</scope>
    <scope>SUBCELLULAR LOCATION</scope>
    <scope>TISSUE SPECIFICITY</scope>
    <scope>INDUCTION BY ALUMINUM</scope>
    <scope>DISRUPTION PHENOTYPE</scope>
</reference>
<reference key="3">
    <citation type="journal article" date="2005" name="Genome Res.">
        <title>Sequence, annotation, and analysis of synteny between rice chromosome 3 and diverged grass species.</title>
        <authorList>
            <consortium name="The rice chromosome 3 sequencing consortium"/>
            <person name="Buell C.R."/>
            <person name="Yuan Q."/>
            <person name="Ouyang S."/>
            <person name="Liu J."/>
            <person name="Zhu W."/>
            <person name="Wang A."/>
            <person name="Maiti R."/>
            <person name="Haas B."/>
            <person name="Wortman J."/>
            <person name="Pertea M."/>
            <person name="Jones K.M."/>
            <person name="Kim M."/>
            <person name="Overton L."/>
            <person name="Tsitrin T."/>
            <person name="Fadrosh D."/>
            <person name="Bera J."/>
            <person name="Weaver B."/>
            <person name="Jin S."/>
            <person name="Johri S."/>
            <person name="Reardon M."/>
            <person name="Webb K."/>
            <person name="Hill J."/>
            <person name="Moffat K."/>
            <person name="Tallon L."/>
            <person name="Van Aken S."/>
            <person name="Lewis M."/>
            <person name="Utterback T."/>
            <person name="Feldblyum T."/>
            <person name="Zismann V."/>
            <person name="Iobst S."/>
            <person name="Hsiao J."/>
            <person name="de Vazeille A.R."/>
            <person name="Salzberg S.L."/>
            <person name="White O."/>
            <person name="Fraser C.M."/>
            <person name="Yu Y."/>
            <person name="Kim H."/>
            <person name="Rambo T."/>
            <person name="Currie J."/>
            <person name="Collura K."/>
            <person name="Kernodle-Thompson S."/>
            <person name="Wei F."/>
            <person name="Kudrna K."/>
            <person name="Ammiraju J.S.S."/>
            <person name="Luo M."/>
            <person name="Goicoechea J.L."/>
            <person name="Wing R.A."/>
            <person name="Henry D."/>
            <person name="Oates R."/>
            <person name="Palmer M."/>
            <person name="Pries G."/>
            <person name="Saski C."/>
            <person name="Simmons J."/>
            <person name="Soderlund C."/>
            <person name="Nelson W."/>
            <person name="de la Bastide M."/>
            <person name="Spiegel L."/>
            <person name="Nascimento L."/>
            <person name="Huang E."/>
            <person name="Preston R."/>
            <person name="Zutavern T."/>
            <person name="Palmer L."/>
            <person name="O'Shaughnessy A."/>
            <person name="Dike S."/>
            <person name="McCombie W.R."/>
            <person name="Minx P."/>
            <person name="Cordum H."/>
            <person name="Wilson R."/>
            <person name="Jin W."/>
            <person name="Lee H.R."/>
            <person name="Jiang J."/>
            <person name="Jackson S."/>
        </authorList>
    </citation>
    <scope>NUCLEOTIDE SEQUENCE [LARGE SCALE GENOMIC DNA]</scope>
    <source>
        <strain>cv. Nipponbare</strain>
    </source>
</reference>
<reference key="4">
    <citation type="journal article" date="2005" name="Nature">
        <title>The map-based sequence of the rice genome.</title>
        <authorList>
            <consortium name="International rice genome sequencing project (IRGSP)"/>
        </authorList>
    </citation>
    <scope>NUCLEOTIDE SEQUENCE [LARGE SCALE GENOMIC DNA]</scope>
    <source>
        <strain>cv. Nipponbare</strain>
    </source>
</reference>
<reference key="5">
    <citation type="journal article" date="2008" name="Nucleic Acids Res.">
        <title>The rice annotation project database (RAP-DB): 2008 update.</title>
        <authorList>
            <consortium name="The rice annotation project (RAP)"/>
        </authorList>
    </citation>
    <scope>GENOME REANNOTATION</scope>
    <source>
        <strain>cv. Nipponbare</strain>
    </source>
</reference>
<reference key="6">
    <citation type="journal article" date="2013" name="Rice">
        <title>Improvement of the Oryza sativa Nipponbare reference genome using next generation sequence and optical map data.</title>
        <authorList>
            <person name="Kawahara Y."/>
            <person name="de la Bastide M."/>
            <person name="Hamilton J.P."/>
            <person name="Kanamori H."/>
            <person name="McCombie W.R."/>
            <person name="Ouyang S."/>
            <person name="Schwartz D.C."/>
            <person name="Tanaka T."/>
            <person name="Wu J."/>
            <person name="Zhou S."/>
            <person name="Childs K.L."/>
            <person name="Davidson R.M."/>
            <person name="Lin H."/>
            <person name="Quesada-Ocampo L."/>
            <person name="Vaillancourt B."/>
            <person name="Sakai H."/>
            <person name="Lee S.S."/>
            <person name="Kim J."/>
            <person name="Numa H."/>
            <person name="Itoh T."/>
            <person name="Buell C.R."/>
            <person name="Matsumoto T."/>
        </authorList>
    </citation>
    <scope>GENOME REANNOTATION</scope>
    <source>
        <strain>cv. Nipponbare</strain>
    </source>
</reference>
<reference key="7">
    <citation type="journal article" date="2003" name="Science">
        <title>Collection, mapping, and annotation of over 28,000 cDNA clones from japonica rice.</title>
        <authorList>
            <consortium name="The rice full-length cDNA consortium"/>
        </authorList>
    </citation>
    <scope>NUCLEOTIDE SEQUENCE [LARGE SCALE MRNA]</scope>
    <source>
        <strain>cv. Nipponbare</strain>
    </source>
</reference>
<reference key="8">
    <citation type="journal article" date="2008" name="Trends Plant Sci.">
        <title>Plant ABC proteins - a unified nomenclature and updated inventory.</title>
        <authorList>
            <person name="Verrier P.J."/>
            <person name="Bird D."/>
            <person name="Burla B."/>
            <person name="Dassa E."/>
            <person name="Forestier C."/>
            <person name="Geisler M."/>
            <person name="Klein M."/>
            <person name="Kolukisaoglu H.U."/>
            <person name="Lee Y."/>
            <person name="Martinoia E."/>
            <person name="Murphy A."/>
            <person name="Rea P.A."/>
            <person name="Samuels L."/>
            <person name="Schulz B."/>
            <person name="Spalding E.J."/>
            <person name="Yazaki K."/>
            <person name="Theodoulou F.L."/>
        </authorList>
    </citation>
    <scope>GENE FAMILY</scope>
    <scope>NOMENCLATURE</scope>
</reference>
<comment type="function">
    <text evidence="4">Metal transporter involved in the sequestration of aluminum into vacuoles, which is required for cellular detoxification of aluminum.</text>
</comment>
<comment type="subcellular location">
    <subcellularLocation>
        <location evidence="4">Vacuole membrane</location>
        <topology evidence="1">Multi-pass membrane protein</topology>
    </subcellularLocation>
</comment>
<comment type="tissue specificity">
    <text evidence="4">Expressed in primary roots ans lateral roots.</text>
</comment>
<comment type="induction">
    <text evidence="4">Induced by aluminum in roots.</text>
</comment>
<comment type="disruption phenotype">
    <text evidence="4">No visible phenotype under normal growth conditions, but mutant plants are hypersensitive to aluminum.</text>
</comment>
<comment type="similarity">
    <text evidence="7">Belongs to the ABC transporter superfamily. ABCB family. Multidrug resistance exporter (TC 3.A.1.201) subfamily.</text>
</comment>
<name>AB25B_ORYSJ</name>
<evidence type="ECO:0000255" key="1"/>
<evidence type="ECO:0000255" key="2">
    <source>
        <dbReference type="PROSITE-ProRule" id="PRU00434"/>
    </source>
</evidence>
<evidence type="ECO:0000255" key="3">
    <source>
        <dbReference type="PROSITE-ProRule" id="PRU00441"/>
    </source>
</evidence>
<evidence type="ECO:0000269" key="4">
    <source>
    </source>
</evidence>
<evidence type="ECO:0000303" key="5">
    <source>
    </source>
</evidence>
<evidence type="ECO:0000303" key="6">
    <source>
    </source>
</evidence>
<evidence type="ECO:0000305" key="7"/>
<evidence type="ECO:0000312" key="8">
    <source>
        <dbReference type="EMBL" id="AAR01687.1"/>
    </source>
</evidence>
<evidence type="ECO:0000312" key="9">
    <source>
        <dbReference type="EMBL" id="ABF98942.1"/>
    </source>
</evidence>
<evidence type="ECO:0000312" key="10">
    <source>
        <dbReference type="EMBL" id="BAF13225.1"/>
    </source>
</evidence>